<proteinExistence type="inferred from homology"/>
<name>GPMA_METPB</name>
<sequence>MERLLVLARHGQSEWNLKKLFTGWRDPELTELGIDEARRAGRWLKSQGTQFDVAFTSNLRRAQNTCALILEEMGQAGLETIRNEALNERDYGDLSGLNKDDARERWGDAQVHEWRRSYDVPPPGGESLKDTAARVLPYYIQTILPRVMSGERVLVAAHGNSLRALVMVLDGMTTKTIASLEIATGIPLVYRLKADTTVESKTVLDKDIDQDN</sequence>
<reference key="1">
    <citation type="submission" date="2008-04" db="EMBL/GenBank/DDBJ databases">
        <title>Complete sequence of chromosome of Methylobacterium populi BJ001.</title>
        <authorList>
            <consortium name="US DOE Joint Genome Institute"/>
            <person name="Copeland A."/>
            <person name="Lucas S."/>
            <person name="Lapidus A."/>
            <person name="Glavina del Rio T."/>
            <person name="Dalin E."/>
            <person name="Tice H."/>
            <person name="Bruce D."/>
            <person name="Goodwin L."/>
            <person name="Pitluck S."/>
            <person name="Chertkov O."/>
            <person name="Brettin T."/>
            <person name="Detter J.C."/>
            <person name="Han C."/>
            <person name="Kuske C.R."/>
            <person name="Schmutz J."/>
            <person name="Larimer F."/>
            <person name="Land M."/>
            <person name="Hauser L."/>
            <person name="Kyrpides N."/>
            <person name="Mikhailova N."/>
            <person name="Marx C."/>
            <person name="Richardson P."/>
        </authorList>
    </citation>
    <scope>NUCLEOTIDE SEQUENCE [LARGE SCALE GENOMIC DNA]</scope>
    <source>
        <strain>ATCC BAA-705 / NCIMB 13946 / BJ001</strain>
    </source>
</reference>
<gene>
    <name evidence="1" type="primary">gpmA</name>
    <name type="ordered locus">Mpop_2434</name>
</gene>
<evidence type="ECO:0000255" key="1">
    <source>
        <dbReference type="HAMAP-Rule" id="MF_01039"/>
    </source>
</evidence>
<comment type="function">
    <text evidence="1">Catalyzes the interconversion of 2-phosphoglycerate and 3-phosphoglycerate.</text>
</comment>
<comment type="catalytic activity">
    <reaction evidence="1">
        <text>(2R)-2-phosphoglycerate = (2R)-3-phosphoglycerate</text>
        <dbReference type="Rhea" id="RHEA:15901"/>
        <dbReference type="ChEBI" id="CHEBI:58272"/>
        <dbReference type="ChEBI" id="CHEBI:58289"/>
        <dbReference type="EC" id="5.4.2.11"/>
    </reaction>
</comment>
<comment type="pathway">
    <text evidence="1">Carbohydrate degradation; glycolysis; pyruvate from D-glyceraldehyde 3-phosphate: step 3/5.</text>
</comment>
<comment type="subunit">
    <text evidence="1">Homodimer.</text>
</comment>
<comment type="similarity">
    <text evidence="1">Belongs to the phosphoglycerate mutase family. BPG-dependent PGAM subfamily.</text>
</comment>
<keyword id="KW-0312">Gluconeogenesis</keyword>
<keyword id="KW-0324">Glycolysis</keyword>
<keyword id="KW-0413">Isomerase</keyword>
<dbReference type="EC" id="5.4.2.11" evidence="1"/>
<dbReference type="EMBL" id="CP001029">
    <property type="protein sequence ID" value="ACB80596.1"/>
    <property type="molecule type" value="Genomic_DNA"/>
</dbReference>
<dbReference type="RefSeq" id="WP_012454327.1">
    <property type="nucleotide sequence ID" value="NC_010725.1"/>
</dbReference>
<dbReference type="SMR" id="B1ZA86"/>
<dbReference type="STRING" id="441620.Mpop_2434"/>
<dbReference type="KEGG" id="mpo:Mpop_2434"/>
<dbReference type="eggNOG" id="COG0588">
    <property type="taxonomic scope" value="Bacteria"/>
</dbReference>
<dbReference type="HOGENOM" id="CLU_033323_1_4_5"/>
<dbReference type="OrthoDB" id="9781415at2"/>
<dbReference type="UniPathway" id="UPA00109">
    <property type="reaction ID" value="UER00186"/>
</dbReference>
<dbReference type="Proteomes" id="UP000007136">
    <property type="component" value="Chromosome"/>
</dbReference>
<dbReference type="GO" id="GO:0004619">
    <property type="term" value="F:phosphoglycerate mutase activity"/>
    <property type="evidence" value="ECO:0007669"/>
    <property type="project" value="UniProtKB-EC"/>
</dbReference>
<dbReference type="GO" id="GO:0006094">
    <property type="term" value="P:gluconeogenesis"/>
    <property type="evidence" value="ECO:0007669"/>
    <property type="project" value="UniProtKB-UniRule"/>
</dbReference>
<dbReference type="GO" id="GO:0006096">
    <property type="term" value="P:glycolytic process"/>
    <property type="evidence" value="ECO:0007669"/>
    <property type="project" value="UniProtKB-UniRule"/>
</dbReference>
<dbReference type="CDD" id="cd07067">
    <property type="entry name" value="HP_PGM_like"/>
    <property type="match status" value="1"/>
</dbReference>
<dbReference type="Gene3D" id="3.40.50.1240">
    <property type="entry name" value="Phosphoglycerate mutase-like"/>
    <property type="match status" value="1"/>
</dbReference>
<dbReference type="HAMAP" id="MF_01039">
    <property type="entry name" value="PGAM_GpmA"/>
    <property type="match status" value="1"/>
</dbReference>
<dbReference type="InterPro" id="IPR013078">
    <property type="entry name" value="His_Pase_superF_clade-1"/>
</dbReference>
<dbReference type="InterPro" id="IPR029033">
    <property type="entry name" value="His_PPase_superfam"/>
</dbReference>
<dbReference type="InterPro" id="IPR001345">
    <property type="entry name" value="PG/BPGM_mutase_AS"/>
</dbReference>
<dbReference type="InterPro" id="IPR005952">
    <property type="entry name" value="Phosphogly_mut1"/>
</dbReference>
<dbReference type="NCBIfam" id="TIGR01258">
    <property type="entry name" value="pgm_1"/>
    <property type="match status" value="2"/>
</dbReference>
<dbReference type="NCBIfam" id="NF002339">
    <property type="entry name" value="PRK01295.1"/>
    <property type="match status" value="1"/>
</dbReference>
<dbReference type="PANTHER" id="PTHR11931">
    <property type="entry name" value="PHOSPHOGLYCERATE MUTASE"/>
    <property type="match status" value="1"/>
</dbReference>
<dbReference type="Pfam" id="PF00300">
    <property type="entry name" value="His_Phos_1"/>
    <property type="match status" value="1"/>
</dbReference>
<dbReference type="PIRSF" id="PIRSF000709">
    <property type="entry name" value="6PFK_2-Ptase"/>
    <property type="match status" value="1"/>
</dbReference>
<dbReference type="SMART" id="SM00855">
    <property type="entry name" value="PGAM"/>
    <property type="match status" value="1"/>
</dbReference>
<dbReference type="SUPFAM" id="SSF53254">
    <property type="entry name" value="Phosphoglycerate mutase-like"/>
    <property type="match status" value="1"/>
</dbReference>
<dbReference type="PROSITE" id="PS00175">
    <property type="entry name" value="PG_MUTASE"/>
    <property type="match status" value="1"/>
</dbReference>
<accession>B1ZA86</accession>
<organism>
    <name type="scientific">Methylorubrum populi (strain ATCC BAA-705 / NCIMB 13946 / BJ001)</name>
    <name type="common">Methylobacterium populi</name>
    <dbReference type="NCBI Taxonomy" id="441620"/>
    <lineage>
        <taxon>Bacteria</taxon>
        <taxon>Pseudomonadati</taxon>
        <taxon>Pseudomonadota</taxon>
        <taxon>Alphaproteobacteria</taxon>
        <taxon>Hyphomicrobiales</taxon>
        <taxon>Methylobacteriaceae</taxon>
        <taxon>Methylorubrum</taxon>
    </lineage>
</organism>
<protein>
    <recommendedName>
        <fullName evidence="1">2,3-bisphosphoglycerate-dependent phosphoglycerate mutase</fullName>
        <shortName evidence="1">BPG-dependent PGAM</shortName>
        <shortName evidence="1">PGAM</shortName>
        <shortName evidence="1">Phosphoglyceromutase</shortName>
        <shortName evidence="1">dPGM</shortName>
        <ecNumber evidence="1">5.4.2.11</ecNumber>
    </recommendedName>
</protein>
<feature type="chain" id="PRO_1000149518" description="2,3-bisphosphoglycerate-dependent phosphoglycerate mutase">
    <location>
        <begin position="1"/>
        <end position="212"/>
    </location>
</feature>
<feature type="active site" description="Tele-phosphohistidine intermediate" evidence="1">
    <location>
        <position position="10"/>
    </location>
</feature>
<feature type="active site" description="Proton donor/acceptor" evidence="1">
    <location>
        <position position="88"/>
    </location>
</feature>
<feature type="binding site" evidence="1">
    <location>
        <begin position="9"/>
        <end position="16"/>
    </location>
    <ligand>
        <name>substrate</name>
    </ligand>
</feature>
<feature type="binding site" evidence="1">
    <location>
        <begin position="22"/>
        <end position="23"/>
    </location>
    <ligand>
        <name>substrate</name>
    </ligand>
</feature>
<feature type="binding site" evidence="1">
    <location>
        <position position="61"/>
    </location>
    <ligand>
        <name>substrate</name>
    </ligand>
</feature>
<feature type="binding site" evidence="1">
    <location>
        <begin position="88"/>
        <end position="91"/>
    </location>
    <ligand>
        <name>substrate</name>
    </ligand>
</feature>
<feature type="binding site" evidence="1">
    <location>
        <position position="99"/>
    </location>
    <ligand>
        <name>substrate</name>
    </ligand>
</feature>
<feature type="binding site" evidence="1">
    <location>
        <begin position="115"/>
        <end position="116"/>
    </location>
    <ligand>
        <name>substrate</name>
    </ligand>
</feature>
<feature type="binding site" evidence="1">
    <location>
        <begin position="159"/>
        <end position="160"/>
    </location>
    <ligand>
        <name>substrate</name>
    </ligand>
</feature>
<feature type="site" description="Transition state stabilizer" evidence="1">
    <location>
        <position position="158"/>
    </location>
</feature>